<gene>
    <name type="primary">yrbF</name>
    <name evidence="3" type="synonym">yjaC</name>
    <name type="ordered locus">BSU27700</name>
</gene>
<sequence length="89" mass="9904">MMTGTLGTLVPIILMFAVLYFLLIRPQQKQQKAVRQMQEELKKGDSVVTIGGLHGTVDSIDESKVVIKTGDNTRLTFDRRAIREVSAAE</sequence>
<keyword id="KW-1003">Cell membrane</keyword>
<keyword id="KW-0472">Membrane</keyword>
<keyword id="KW-0653">Protein transport</keyword>
<keyword id="KW-1185">Reference proteome</keyword>
<keyword id="KW-0811">Translocation</keyword>
<keyword id="KW-0812">Transmembrane</keyword>
<keyword id="KW-1133">Transmembrane helix</keyword>
<keyword id="KW-0813">Transport</keyword>
<reference key="1">
    <citation type="submission" date="1997-12" db="EMBL/GenBank/DDBJ databases">
        <title>A 17.8 kb segment in the spoVB-nadC region of the Bacillus subtilis 168 chromosome: sequencing and ruv operon identification.</title>
        <authorList>
            <person name="Tosato V."/>
            <person name="Bolotin A."/>
            <person name="Bertani I."/>
            <person name="Valentino I."/>
            <person name="Bruschi C.V."/>
        </authorList>
    </citation>
    <scope>NUCLEOTIDE SEQUENCE [GENOMIC DNA]</scope>
    <source>
        <strain>168</strain>
    </source>
</reference>
<reference key="2">
    <citation type="journal article" date="1997" name="Nature">
        <title>The complete genome sequence of the Gram-positive bacterium Bacillus subtilis.</title>
        <authorList>
            <person name="Kunst F."/>
            <person name="Ogasawara N."/>
            <person name="Moszer I."/>
            <person name="Albertini A.M."/>
            <person name="Alloni G."/>
            <person name="Azevedo V."/>
            <person name="Bertero M.G."/>
            <person name="Bessieres P."/>
            <person name="Bolotin A."/>
            <person name="Borchert S."/>
            <person name="Borriss R."/>
            <person name="Boursier L."/>
            <person name="Brans A."/>
            <person name="Braun M."/>
            <person name="Brignell S.C."/>
            <person name="Bron S."/>
            <person name="Brouillet S."/>
            <person name="Bruschi C.V."/>
            <person name="Caldwell B."/>
            <person name="Capuano V."/>
            <person name="Carter N.M."/>
            <person name="Choi S.-K."/>
            <person name="Codani J.-J."/>
            <person name="Connerton I.F."/>
            <person name="Cummings N.J."/>
            <person name="Daniel R.A."/>
            <person name="Denizot F."/>
            <person name="Devine K.M."/>
            <person name="Duesterhoeft A."/>
            <person name="Ehrlich S.D."/>
            <person name="Emmerson P.T."/>
            <person name="Entian K.-D."/>
            <person name="Errington J."/>
            <person name="Fabret C."/>
            <person name="Ferrari E."/>
            <person name="Foulger D."/>
            <person name="Fritz C."/>
            <person name="Fujita M."/>
            <person name="Fujita Y."/>
            <person name="Fuma S."/>
            <person name="Galizzi A."/>
            <person name="Galleron N."/>
            <person name="Ghim S.-Y."/>
            <person name="Glaser P."/>
            <person name="Goffeau A."/>
            <person name="Golightly E.J."/>
            <person name="Grandi G."/>
            <person name="Guiseppi G."/>
            <person name="Guy B.J."/>
            <person name="Haga K."/>
            <person name="Haiech J."/>
            <person name="Harwood C.R."/>
            <person name="Henaut A."/>
            <person name="Hilbert H."/>
            <person name="Holsappel S."/>
            <person name="Hosono S."/>
            <person name="Hullo M.-F."/>
            <person name="Itaya M."/>
            <person name="Jones L.-M."/>
            <person name="Joris B."/>
            <person name="Karamata D."/>
            <person name="Kasahara Y."/>
            <person name="Klaerr-Blanchard M."/>
            <person name="Klein C."/>
            <person name="Kobayashi Y."/>
            <person name="Koetter P."/>
            <person name="Koningstein G."/>
            <person name="Krogh S."/>
            <person name="Kumano M."/>
            <person name="Kurita K."/>
            <person name="Lapidus A."/>
            <person name="Lardinois S."/>
            <person name="Lauber J."/>
            <person name="Lazarevic V."/>
            <person name="Lee S.-M."/>
            <person name="Levine A."/>
            <person name="Liu H."/>
            <person name="Masuda S."/>
            <person name="Mauel C."/>
            <person name="Medigue C."/>
            <person name="Medina N."/>
            <person name="Mellado R.P."/>
            <person name="Mizuno M."/>
            <person name="Moestl D."/>
            <person name="Nakai S."/>
            <person name="Noback M."/>
            <person name="Noone D."/>
            <person name="O'Reilly M."/>
            <person name="Ogawa K."/>
            <person name="Ogiwara A."/>
            <person name="Oudega B."/>
            <person name="Park S.-H."/>
            <person name="Parro V."/>
            <person name="Pohl T.M."/>
            <person name="Portetelle D."/>
            <person name="Porwollik S."/>
            <person name="Prescott A.M."/>
            <person name="Presecan E."/>
            <person name="Pujic P."/>
            <person name="Purnelle B."/>
            <person name="Rapoport G."/>
            <person name="Rey M."/>
            <person name="Reynolds S."/>
            <person name="Rieger M."/>
            <person name="Rivolta C."/>
            <person name="Rocha E."/>
            <person name="Roche B."/>
            <person name="Rose M."/>
            <person name="Sadaie Y."/>
            <person name="Sato T."/>
            <person name="Scanlan E."/>
            <person name="Schleich S."/>
            <person name="Schroeter R."/>
            <person name="Scoffone F."/>
            <person name="Sekiguchi J."/>
            <person name="Sekowska A."/>
            <person name="Seror S.J."/>
            <person name="Serror P."/>
            <person name="Shin B.-S."/>
            <person name="Soldo B."/>
            <person name="Sorokin A."/>
            <person name="Tacconi E."/>
            <person name="Takagi T."/>
            <person name="Takahashi H."/>
            <person name="Takemaru K."/>
            <person name="Takeuchi M."/>
            <person name="Tamakoshi A."/>
            <person name="Tanaka T."/>
            <person name="Terpstra P."/>
            <person name="Tognoni A."/>
            <person name="Tosato V."/>
            <person name="Uchiyama S."/>
            <person name="Vandenbol M."/>
            <person name="Vannier F."/>
            <person name="Vassarotti A."/>
            <person name="Viari A."/>
            <person name="Wambutt R."/>
            <person name="Wedler E."/>
            <person name="Wedler H."/>
            <person name="Weitzenegger T."/>
            <person name="Winters P."/>
            <person name="Wipat A."/>
            <person name="Yamamoto H."/>
            <person name="Yamane K."/>
            <person name="Yasumoto K."/>
            <person name="Yata K."/>
            <person name="Yoshida K."/>
            <person name="Yoshikawa H.-F."/>
            <person name="Zumstein E."/>
            <person name="Yoshikawa H."/>
            <person name="Danchin A."/>
        </authorList>
    </citation>
    <scope>NUCLEOTIDE SEQUENCE [LARGE SCALE GENOMIC DNA]</scope>
    <source>
        <strain>168</strain>
    </source>
</reference>
<accession>O32052</accession>
<organism>
    <name type="scientific">Bacillus subtilis (strain 168)</name>
    <dbReference type="NCBI Taxonomy" id="224308"/>
    <lineage>
        <taxon>Bacteria</taxon>
        <taxon>Bacillati</taxon>
        <taxon>Bacillota</taxon>
        <taxon>Bacilli</taxon>
        <taxon>Bacillales</taxon>
        <taxon>Bacillaceae</taxon>
        <taxon>Bacillus</taxon>
    </lineage>
</organism>
<protein>
    <recommendedName>
        <fullName>Sec translocon accessory complex subunit YrbF</fullName>
    </recommendedName>
</protein>
<comment type="function">
    <text evidence="1">The SecYEG-SecDF-YajC-YidC holo-translocon (HTL) protein secretase/insertase is a supercomplex required for protein secretion, insertion of proteins into membranes, and assembly of membrane protein complexes. While the SecYEG complex is essential for assembly of a number of proteins and complexes, the SecDF-YajC-YidC subcomplex facilitates these functions.</text>
</comment>
<comment type="subunit">
    <text evidence="1">Part of the SecDF-YidC-YajC translocase complex. The SecDF-YidC-YajC translocase forms a supercomplex with SecYEG, called the holo-translocon (HTL).</text>
</comment>
<comment type="subcellular location">
    <subcellularLocation>
        <location evidence="3">Cell membrane</location>
        <topology evidence="3">Single-pass membrane protein</topology>
    </subcellularLocation>
</comment>
<comment type="similarity">
    <text evidence="3">Belongs to the YajC family.</text>
</comment>
<comment type="sequence caution" evidence="3">
    <conflict type="erroneous initiation">
        <sequence resource="EMBL-CDS" id="CAB14730"/>
    </conflict>
    <text>Truncated N-terminus.</text>
</comment>
<evidence type="ECO:0000250" key="1">
    <source>
        <dbReference type="UniProtKB" id="P0ADZ7"/>
    </source>
</evidence>
<evidence type="ECO:0000255" key="2"/>
<evidence type="ECO:0000305" key="3"/>
<name>YRBF_BACSU</name>
<proteinExistence type="inferred from homology"/>
<dbReference type="EMBL" id="Y15896">
    <property type="protein sequence ID" value="CAB75334.1"/>
    <property type="molecule type" value="Genomic_DNA"/>
</dbReference>
<dbReference type="EMBL" id="AL009126">
    <property type="protein sequence ID" value="CAB14730.2"/>
    <property type="status" value="ALT_INIT"/>
    <property type="molecule type" value="Genomic_DNA"/>
</dbReference>
<dbReference type="PIR" id="E69972">
    <property type="entry name" value="E69972"/>
</dbReference>
<dbReference type="RefSeq" id="NP_390648.2">
    <property type="nucleotide sequence ID" value="NC_000964.3"/>
</dbReference>
<dbReference type="SMR" id="O32052"/>
<dbReference type="FunCoup" id="O32052">
    <property type="interactions" value="346"/>
</dbReference>
<dbReference type="STRING" id="224308.BSU27700"/>
<dbReference type="jPOST" id="O32052"/>
<dbReference type="PaxDb" id="224308-BSU27700"/>
<dbReference type="EnsemblBacteria" id="CAB14730">
    <property type="protein sequence ID" value="CAB14730"/>
    <property type="gene ID" value="BSU_27700"/>
</dbReference>
<dbReference type="GeneID" id="936257"/>
<dbReference type="KEGG" id="bsu:BSU27700"/>
<dbReference type="PATRIC" id="fig|224308.43.peg.2892"/>
<dbReference type="eggNOG" id="COG1862">
    <property type="taxonomic scope" value="Bacteria"/>
</dbReference>
<dbReference type="InParanoid" id="O32052"/>
<dbReference type="OrthoDB" id="9800132at2"/>
<dbReference type="BioCyc" id="BSUB:BSU27700-MONOMER"/>
<dbReference type="Proteomes" id="UP000001570">
    <property type="component" value="Chromosome"/>
</dbReference>
<dbReference type="GO" id="GO:0005886">
    <property type="term" value="C:plasma membrane"/>
    <property type="evidence" value="ECO:0000318"/>
    <property type="project" value="GO_Central"/>
</dbReference>
<dbReference type="GO" id="GO:0015031">
    <property type="term" value="P:protein transport"/>
    <property type="evidence" value="ECO:0007669"/>
    <property type="project" value="UniProtKB-KW"/>
</dbReference>
<dbReference type="InterPro" id="IPR003849">
    <property type="entry name" value="Preprotein_translocase_YajC"/>
</dbReference>
<dbReference type="NCBIfam" id="TIGR00739">
    <property type="entry name" value="yajC"/>
    <property type="match status" value="1"/>
</dbReference>
<dbReference type="PANTHER" id="PTHR33909">
    <property type="entry name" value="SEC TRANSLOCON ACCESSORY COMPLEX SUBUNIT YAJC"/>
    <property type="match status" value="1"/>
</dbReference>
<dbReference type="PANTHER" id="PTHR33909:SF1">
    <property type="entry name" value="SEC TRANSLOCON ACCESSORY COMPLEX SUBUNIT YAJC"/>
    <property type="match status" value="1"/>
</dbReference>
<dbReference type="Pfam" id="PF02699">
    <property type="entry name" value="YajC"/>
    <property type="match status" value="1"/>
</dbReference>
<dbReference type="PRINTS" id="PR01853">
    <property type="entry name" value="YAJCTRNLCASE"/>
</dbReference>
<dbReference type="SMART" id="SM01323">
    <property type="entry name" value="YajC"/>
    <property type="match status" value="1"/>
</dbReference>
<feature type="chain" id="PRO_0000097020" description="Sec translocon accessory complex subunit YrbF">
    <location>
        <begin position="1"/>
        <end position="89"/>
    </location>
</feature>
<feature type="transmembrane region" description="Helical" evidence="2">
    <location>
        <begin position="4"/>
        <end position="24"/>
    </location>
</feature>